<gene>
    <name type="primary">CRN1</name>
    <name type="ordered locus">YLR429W</name>
    <name type="ORF">L9576.2</name>
</gene>
<proteinExistence type="evidence at protein level"/>
<organism>
    <name type="scientific">Saccharomyces cerevisiae (strain ATCC 204508 / S288c)</name>
    <name type="common">Baker's yeast</name>
    <dbReference type="NCBI Taxonomy" id="559292"/>
    <lineage>
        <taxon>Eukaryota</taxon>
        <taxon>Fungi</taxon>
        <taxon>Dikarya</taxon>
        <taxon>Ascomycota</taxon>
        <taxon>Saccharomycotina</taxon>
        <taxon>Saccharomycetes</taxon>
        <taxon>Saccharomycetales</taxon>
        <taxon>Saccharomycetaceae</taxon>
        <taxon>Saccharomyces</taxon>
    </lineage>
</organism>
<dbReference type="EMBL" id="U20939">
    <property type="protein sequence ID" value="AAB67503.1"/>
    <property type="molecule type" value="Genomic_DNA"/>
</dbReference>
<dbReference type="EMBL" id="AY693023">
    <property type="protein sequence ID" value="AAT93042.1"/>
    <property type="molecule type" value="Genomic_DNA"/>
</dbReference>
<dbReference type="EMBL" id="BK006945">
    <property type="protein sequence ID" value="DAA09730.1"/>
    <property type="molecule type" value="Genomic_DNA"/>
</dbReference>
<dbReference type="PIR" id="S53415">
    <property type="entry name" value="S53415"/>
</dbReference>
<dbReference type="RefSeq" id="NP_013533.1">
    <property type="nucleotide sequence ID" value="NM_001182317.1"/>
</dbReference>
<dbReference type="EMDB" id="EMD-6100"/>
<dbReference type="EMDB" id="EMD-6101"/>
<dbReference type="SMR" id="Q06440"/>
<dbReference type="BioGRID" id="31688">
    <property type="interactions" value="194"/>
</dbReference>
<dbReference type="DIP" id="DIP-2722N"/>
<dbReference type="FunCoup" id="Q06440">
    <property type="interactions" value="420"/>
</dbReference>
<dbReference type="IntAct" id="Q06440">
    <property type="interactions" value="23"/>
</dbReference>
<dbReference type="MINT" id="Q06440"/>
<dbReference type="STRING" id="4932.YLR429W"/>
<dbReference type="iPTMnet" id="Q06440"/>
<dbReference type="PaxDb" id="4932-YLR429W"/>
<dbReference type="PeptideAtlas" id="Q06440"/>
<dbReference type="EnsemblFungi" id="YLR429W_mRNA">
    <property type="protein sequence ID" value="YLR429W"/>
    <property type="gene ID" value="YLR429W"/>
</dbReference>
<dbReference type="GeneID" id="851148"/>
<dbReference type="KEGG" id="sce:YLR429W"/>
<dbReference type="AGR" id="SGD:S000004421"/>
<dbReference type="SGD" id="S000004421">
    <property type="gene designation" value="CRN1"/>
</dbReference>
<dbReference type="VEuPathDB" id="FungiDB:YLR429W"/>
<dbReference type="eggNOG" id="KOG0303">
    <property type="taxonomic scope" value="Eukaryota"/>
</dbReference>
<dbReference type="HOGENOM" id="CLU_026859_3_2_1"/>
<dbReference type="InParanoid" id="Q06440"/>
<dbReference type="OMA" id="NFQDDIY"/>
<dbReference type="OrthoDB" id="1850764at2759"/>
<dbReference type="BioCyc" id="YEAST:G3O-32488-MONOMER"/>
<dbReference type="BioGRID-ORCS" id="851148">
    <property type="hits" value="4 hits in 10 CRISPR screens"/>
</dbReference>
<dbReference type="PRO" id="PR:Q06440"/>
<dbReference type="Proteomes" id="UP000002311">
    <property type="component" value="Chromosome XII"/>
</dbReference>
<dbReference type="RNAct" id="Q06440">
    <property type="molecule type" value="protein"/>
</dbReference>
<dbReference type="GO" id="GO:0030479">
    <property type="term" value="C:actin cortical patch"/>
    <property type="evidence" value="ECO:0000314"/>
    <property type="project" value="SGD"/>
</dbReference>
<dbReference type="GO" id="GO:0051015">
    <property type="term" value="F:actin filament binding"/>
    <property type="evidence" value="ECO:0000314"/>
    <property type="project" value="SGD"/>
</dbReference>
<dbReference type="GO" id="GO:0071933">
    <property type="term" value="F:Arp2/3 complex binding"/>
    <property type="evidence" value="ECO:0000314"/>
    <property type="project" value="SGD"/>
</dbReference>
<dbReference type="GO" id="GO:0008017">
    <property type="term" value="F:microtubule binding"/>
    <property type="evidence" value="ECO:0000314"/>
    <property type="project" value="SGD"/>
</dbReference>
<dbReference type="GO" id="GO:0030674">
    <property type="term" value="F:protein-macromolecule adaptor activity"/>
    <property type="evidence" value="ECO:0000314"/>
    <property type="project" value="SGD"/>
</dbReference>
<dbReference type="GO" id="GO:0051666">
    <property type="term" value="P:actin cortical patch localization"/>
    <property type="evidence" value="ECO:0000315"/>
    <property type="project" value="SGD"/>
</dbReference>
<dbReference type="GO" id="GO:0071846">
    <property type="term" value="P:actin filament debranching"/>
    <property type="evidence" value="ECO:0000314"/>
    <property type="project" value="SGD"/>
</dbReference>
<dbReference type="GO" id="GO:0007015">
    <property type="term" value="P:actin filament organization"/>
    <property type="evidence" value="ECO:0000315"/>
    <property type="project" value="SGD"/>
</dbReference>
<dbReference type="GO" id="GO:0007017">
    <property type="term" value="P:microtubule-based process"/>
    <property type="evidence" value="ECO:0000353"/>
    <property type="project" value="SGD"/>
</dbReference>
<dbReference type="GO" id="GO:0034316">
    <property type="term" value="P:negative regulation of Arp2/3 complex-mediated actin nucleation"/>
    <property type="evidence" value="ECO:0000314"/>
    <property type="project" value="SGD"/>
</dbReference>
<dbReference type="GO" id="GO:2000601">
    <property type="term" value="P:positive regulation of Arp2/3 complex-mediated actin nucleation"/>
    <property type="evidence" value="ECO:0000314"/>
    <property type="project" value="SGD"/>
</dbReference>
<dbReference type="FunFam" id="2.130.10.10:FF:000197">
    <property type="entry name" value="Coronin"/>
    <property type="match status" value="1"/>
</dbReference>
<dbReference type="Gene3D" id="2.130.10.10">
    <property type="entry name" value="YVTN repeat-like/Quinoprotein amine dehydrogenase"/>
    <property type="match status" value="1"/>
</dbReference>
<dbReference type="InterPro" id="IPR015505">
    <property type="entry name" value="Coronin"/>
</dbReference>
<dbReference type="InterPro" id="IPR015048">
    <property type="entry name" value="DUF1899"/>
</dbReference>
<dbReference type="InterPro" id="IPR020472">
    <property type="entry name" value="G-protein_beta_WD-40_rep"/>
</dbReference>
<dbReference type="InterPro" id="IPR015943">
    <property type="entry name" value="WD40/YVTN_repeat-like_dom_sf"/>
</dbReference>
<dbReference type="InterPro" id="IPR019775">
    <property type="entry name" value="WD40_repeat_CS"/>
</dbReference>
<dbReference type="InterPro" id="IPR036322">
    <property type="entry name" value="WD40_repeat_dom_sf"/>
</dbReference>
<dbReference type="InterPro" id="IPR001680">
    <property type="entry name" value="WD40_rpt"/>
</dbReference>
<dbReference type="PANTHER" id="PTHR10856">
    <property type="entry name" value="CORONIN"/>
    <property type="match status" value="1"/>
</dbReference>
<dbReference type="PANTHER" id="PTHR10856:SF0">
    <property type="entry name" value="CORONIN"/>
    <property type="match status" value="1"/>
</dbReference>
<dbReference type="Pfam" id="PF08953">
    <property type="entry name" value="DUF1899"/>
    <property type="match status" value="1"/>
</dbReference>
<dbReference type="Pfam" id="PF00400">
    <property type="entry name" value="WD40"/>
    <property type="match status" value="3"/>
</dbReference>
<dbReference type="Pfam" id="PF16300">
    <property type="entry name" value="WD40_4"/>
    <property type="match status" value="1"/>
</dbReference>
<dbReference type="PRINTS" id="PR00320">
    <property type="entry name" value="GPROTEINBRPT"/>
</dbReference>
<dbReference type="SMART" id="SM01166">
    <property type="entry name" value="DUF1899"/>
    <property type="match status" value="1"/>
</dbReference>
<dbReference type="SMART" id="SM01167">
    <property type="entry name" value="DUF1900"/>
    <property type="match status" value="1"/>
</dbReference>
<dbReference type="SMART" id="SM00320">
    <property type="entry name" value="WD40"/>
    <property type="match status" value="4"/>
</dbReference>
<dbReference type="SUPFAM" id="SSF50978">
    <property type="entry name" value="WD40 repeat-like"/>
    <property type="match status" value="1"/>
</dbReference>
<dbReference type="PROSITE" id="PS00678">
    <property type="entry name" value="WD_REPEATS_1"/>
    <property type="match status" value="3"/>
</dbReference>
<dbReference type="PROSITE" id="PS50082">
    <property type="entry name" value="WD_REPEATS_2"/>
    <property type="match status" value="3"/>
</dbReference>
<dbReference type="PROSITE" id="PS50294">
    <property type="entry name" value="WD_REPEATS_REGION"/>
    <property type="match status" value="1"/>
</dbReference>
<keyword id="KW-0009">Actin-binding</keyword>
<keyword id="KW-0175">Coiled coil</keyword>
<keyword id="KW-0597">Phosphoprotein</keyword>
<keyword id="KW-1185">Reference proteome</keyword>
<keyword id="KW-0677">Repeat</keyword>
<keyword id="KW-0853">WD repeat</keyword>
<accession>Q06440</accession>
<accession>D6VZ64</accession>
<sequence>MSGKFVRASKYRHVFGQAAKKELQYEKLKVTNNAWDSNLLKTNGKFIAVNWNASGGGAFAVIPIEEVGKAPDQVPLFRGHTAQVLDTDFDPFNDHRIASGSDDSKIGIWDIPENYKFHDHVDEDGEPIDIKPVKFLTGHARKVGHVLYHPVAENVLASSSGDYTVKLWNVETGKDMITLKHPDMVTSMSFSYDGNYLATVARDKKLRVWNIREEKIVSEGPAHTGAKNQRVVWLGNSDRLATTGFSKLSDRQIGIWDAFNIEKGDLGGFYTVDQSSGILMPFYDEGNKILYLVGKGDGNIRYYEFQNDELFELSEFQSTEAQRGFAVAPKRMVNVKENEVLKGFKTVVDQRIEPVSFFVPRRSEEFQEDIYPDAPSNKPALTAEEWFSGKSVEGPILVSMRSIYDGSAPSFHEAKRPQQPTTQETALEEKKEQPKVEKPISESEKEVKQEAPKSPSPLKSASSSSTINHVLKEDNSINKLLKKSSDIDQVNNAEDPSRDTSGWEEADDEPAPIKIETPVTPTETKKDRTPKVEPSKELKPEPVSIATDRKQEQSLPQEEKSSEKTKSPEQEKSATPPSSITAAKTAITASSKEEPSAARTSPKSLGLKKSVEKLSTLVLQLEDVVDKLTKANLDKDERLLKLEQKIGELSK</sequence>
<protein>
    <recommendedName>
        <fullName>Coronin-like protein</fullName>
    </recommendedName>
</protein>
<reference key="1">
    <citation type="journal article" date="1997" name="Nature">
        <title>The nucleotide sequence of Saccharomyces cerevisiae chromosome XII.</title>
        <authorList>
            <person name="Johnston M."/>
            <person name="Hillier L.W."/>
            <person name="Riles L."/>
            <person name="Albermann K."/>
            <person name="Andre B."/>
            <person name="Ansorge W."/>
            <person name="Benes V."/>
            <person name="Brueckner M."/>
            <person name="Delius H."/>
            <person name="Dubois E."/>
            <person name="Duesterhoeft A."/>
            <person name="Entian K.-D."/>
            <person name="Floeth M."/>
            <person name="Goffeau A."/>
            <person name="Hebling U."/>
            <person name="Heumann K."/>
            <person name="Heuss-Neitzel D."/>
            <person name="Hilbert H."/>
            <person name="Hilger F."/>
            <person name="Kleine K."/>
            <person name="Koetter P."/>
            <person name="Louis E.J."/>
            <person name="Messenguy F."/>
            <person name="Mewes H.-W."/>
            <person name="Miosga T."/>
            <person name="Moestl D."/>
            <person name="Mueller-Auer S."/>
            <person name="Nentwich U."/>
            <person name="Obermaier B."/>
            <person name="Piravandi E."/>
            <person name="Pohl T.M."/>
            <person name="Portetelle D."/>
            <person name="Purnelle B."/>
            <person name="Rechmann S."/>
            <person name="Rieger M."/>
            <person name="Rinke M."/>
            <person name="Rose M."/>
            <person name="Scharfe M."/>
            <person name="Scherens B."/>
            <person name="Scholler P."/>
            <person name="Schwager C."/>
            <person name="Schwarz S."/>
            <person name="Underwood A.P."/>
            <person name="Urrestarazu L.A."/>
            <person name="Vandenbol M."/>
            <person name="Verhasselt P."/>
            <person name="Vierendeels F."/>
            <person name="Voet M."/>
            <person name="Volckaert G."/>
            <person name="Voss H."/>
            <person name="Wambutt R."/>
            <person name="Wedler E."/>
            <person name="Wedler H."/>
            <person name="Zimmermann F.K."/>
            <person name="Zollner A."/>
            <person name="Hani J."/>
            <person name="Hoheisel J.D."/>
        </authorList>
    </citation>
    <scope>NUCLEOTIDE SEQUENCE [LARGE SCALE GENOMIC DNA]</scope>
    <source>
        <strain>ATCC 204508 / S288c</strain>
    </source>
</reference>
<reference key="2">
    <citation type="journal article" date="2014" name="G3 (Bethesda)">
        <title>The reference genome sequence of Saccharomyces cerevisiae: Then and now.</title>
        <authorList>
            <person name="Engel S.R."/>
            <person name="Dietrich F.S."/>
            <person name="Fisk D.G."/>
            <person name="Binkley G."/>
            <person name="Balakrishnan R."/>
            <person name="Costanzo M.C."/>
            <person name="Dwight S.S."/>
            <person name="Hitz B.C."/>
            <person name="Karra K."/>
            <person name="Nash R.S."/>
            <person name="Weng S."/>
            <person name="Wong E.D."/>
            <person name="Lloyd P."/>
            <person name="Skrzypek M.S."/>
            <person name="Miyasato S.R."/>
            <person name="Simison M."/>
            <person name="Cherry J.M."/>
        </authorList>
    </citation>
    <scope>GENOME REANNOTATION</scope>
    <source>
        <strain>ATCC 204508 / S288c</strain>
    </source>
</reference>
<reference key="3">
    <citation type="journal article" date="2007" name="Genome Res.">
        <title>Approaching a complete repository of sequence-verified protein-encoding clones for Saccharomyces cerevisiae.</title>
        <authorList>
            <person name="Hu Y."/>
            <person name="Rolfs A."/>
            <person name="Bhullar B."/>
            <person name="Murthy T.V.S."/>
            <person name="Zhu C."/>
            <person name="Berger M.F."/>
            <person name="Camargo A.A."/>
            <person name="Kelley F."/>
            <person name="McCarron S."/>
            <person name="Jepson D."/>
            <person name="Richardson A."/>
            <person name="Raphael J."/>
            <person name="Moreira D."/>
            <person name="Taycher E."/>
            <person name="Zuo D."/>
            <person name="Mohr S."/>
            <person name="Kane M.F."/>
            <person name="Williamson J."/>
            <person name="Simpson A.J.G."/>
            <person name="Bulyk M.L."/>
            <person name="Harlow E."/>
            <person name="Marsischky G."/>
            <person name="Kolodner R.D."/>
            <person name="LaBaer J."/>
        </authorList>
    </citation>
    <scope>NUCLEOTIDE SEQUENCE [GENOMIC DNA]</scope>
    <source>
        <strain>ATCC 204508 / S288c</strain>
    </source>
</reference>
<reference key="4">
    <citation type="journal article" date="2003" name="Nature">
        <title>Global analysis of protein expression in yeast.</title>
        <authorList>
            <person name="Ghaemmaghami S."/>
            <person name="Huh W.-K."/>
            <person name="Bower K."/>
            <person name="Howson R.W."/>
            <person name="Belle A."/>
            <person name="Dephoure N."/>
            <person name="O'Shea E.K."/>
            <person name="Weissman J.S."/>
        </authorList>
    </citation>
    <scope>LEVEL OF PROTEIN EXPRESSION [LARGE SCALE ANALYSIS]</scope>
</reference>
<reference key="5">
    <citation type="journal article" date="2007" name="J. Proteome Res.">
        <title>Large-scale phosphorylation analysis of alpha-factor-arrested Saccharomyces cerevisiae.</title>
        <authorList>
            <person name="Li X."/>
            <person name="Gerber S.A."/>
            <person name="Rudner A.D."/>
            <person name="Beausoleil S.A."/>
            <person name="Haas W."/>
            <person name="Villen J."/>
            <person name="Elias J.E."/>
            <person name="Gygi S.P."/>
        </authorList>
    </citation>
    <scope>PHOSPHORYLATION [LARGE SCALE ANALYSIS] AT THR-517</scope>
    <scope>IDENTIFICATION BY MASS SPECTROMETRY [LARGE SCALE ANALYSIS]</scope>
    <source>
        <strain>ADR376</strain>
    </source>
</reference>
<reference key="6">
    <citation type="journal article" date="2007" name="Proc. Natl. Acad. Sci. U.S.A.">
        <title>Analysis of phosphorylation sites on proteins from Saccharomyces cerevisiae by electron transfer dissociation (ETD) mass spectrometry.</title>
        <authorList>
            <person name="Chi A."/>
            <person name="Huttenhower C."/>
            <person name="Geer L.Y."/>
            <person name="Coon J.J."/>
            <person name="Syka J.E.P."/>
            <person name="Bai D.L."/>
            <person name="Shabanowitz J."/>
            <person name="Burke D.J."/>
            <person name="Troyanskaya O.G."/>
            <person name="Hunt D.F."/>
        </authorList>
    </citation>
    <scope>PHOSPHORYLATION [LARGE SCALE ANALYSIS] AT SER-441; SER-454 AND THR-529</scope>
    <scope>IDENTIFICATION BY MASS SPECTROMETRY [LARGE SCALE ANALYSIS]</scope>
</reference>
<reference key="7">
    <citation type="journal article" date="2008" name="Mol. Cell. Proteomics">
        <title>A multidimensional chromatography technology for in-depth phosphoproteome analysis.</title>
        <authorList>
            <person name="Albuquerque C.P."/>
            <person name="Smolka M.B."/>
            <person name="Payne S.H."/>
            <person name="Bafna V."/>
            <person name="Eng J."/>
            <person name="Zhou H."/>
        </authorList>
    </citation>
    <scope>PHOSPHORYLATION [LARGE SCALE ANALYSIS] AT SER-454 AND SER-456</scope>
    <scope>IDENTIFICATION BY MASS SPECTROMETRY [LARGE SCALE ANALYSIS]</scope>
</reference>
<reference key="8">
    <citation type="journal article" date="2009" name="Science">
        <title>Global analysis of Cdk1 substrate phosphorylation sites provides insights into evolution.</title>
        <authorList>
            <person name="Holt L.J."/>
            <person name="Tuch B.B."/>
            <person name="Villen J."/>
            <person name="Johnson A.D."/>
            <person name="Gygi S.P."/>
            <person name="Morgan D.O."/>
        </authorList>
    </citation>
    <scope>PHOSPHORYLATION [LARGE SCALE ANALYSIS] AT SER-454; SER-456; THR-517; SER-573 AND SER-579</scope>
    <scope>IDENTIFICATION BY MASS SPECTROMETRY [LARGE SCALE ANALYSIS]</scope>
</reference>
<comment type="subunit">
    <text evidence="1">Binds to F-actin.</text>
</comment>
<comment type="interaction">
    <interactant intactId="EBI-4950">
        <id>Q06440</id>
    </interactant>
    <interactant intactId="EBI-2169">
        <id>P60010</id>
        <label>ACT1</label>
    </interactant>
    <organismsDiffer>false</organismsDiffer>
    <experiments>3</experiments>
</comment>
<comment type="interaction">
    <interactant intactId="EBI-4950">
        <id>Q06440</id>
    </interactant>
    <interactant intactId="EBI-367540">
        <id>P68135</id>
        <label>ACTA1</label>
    </interactant>
    <organismsDiffer>true</organismsDiffer>
    <experiments>3</experiments>
</comment>
<comment type="miscellaneous">
    <text evidence="4">Present with 2900 molecules/cell in log phase SD medium.</text>
</comment>
<comment type="similarity">
    <text evidence="5">Belongs to the WD repeat coronin family.</text>
</comment>
<evidence type="ECO:0000250" key="1"/>
<evidence type="ECO:0000255" key="2"/>
<evidence type="ECO:0000256" key="3">
    <source>
        <dbReference type="SAM" id="MobiDB-lite"/>
    </source>
</evidence>
<evidence type="ECO:0000269" key="4">
    <source>
    </source>
</evidence>
<evidence type="ECO:0000305" key="5"/>
<evidence type="ECO:0007744" key="6">
    <source>
    </source>
</evidence>
<evidence type="ECO:0007744" key="7">
    <source>
    </source>
</evidence>
<evidence type="ECO:0007744" key="8">
    <source>
    </source>
</evidence>
<evidence type="ECO:0007744" key="9">
    <source>
    </source>
</evidence>
<feature type="chain" id="PRO_0000050940" description="Coronin-like protein">
    <location>
        <begin position="1"/>
        <end position="651"/>
    </location>
</feature>
<feature type="repeat" description="WD 1">
    <location>
        <begin position="79"/>
        <end position="110"/>
    </location>
</feature>
<feature type="repeat" description="WD 2">
    <location>
        <begin position="138"/>
        <end position="169"/>
    </location>
</feature>
<feature type="repeat" description="WD 3">
    <location>
        <begin position="180"/>
        <end position="210"/>
    </location>
</feature>
<feature type="repeat" description="WD 4">
    <location>
        <begin position="226"/>
        <end position="257"/>
    </location>
</feature>
<feature type="region of interest" description="Disordered" evidence="3">
    <location>
        <begin position="408"/>
        <end position="609"/>
    </location>
</feature>
<feature type="coiled-coil region" evidence="2">
    <location>
        <begin position="618"/>
        <end position="650"/>
    </location>
</feature>
<feature type="compositionally biased region" description="Basic and acidic residues" evidence="3">
    <location>
        <begin position="427"/>
        <end position="451"/>
    </location>
</feature>
<feature type="compositionally biased region" description="Low complexity" evidence="3">
    <location>
        <begin position="452"/>
        <end position="465"/>
    </location>
</feature>
<feature type="compositionally biased region" description="Basic and acidic residues" evidence="3">
    <location>
        <begin position="523"/>
        <end position="540"/>
    </location>
</feature>
<feature type="compositionally biased region" description="Basic and acidic residues" evidence="3">
    <location>
        <begin position="547"/>
        <end position="572"/>
    </location>
</feature>
<feature type="compositionally biased region" description="Low complexity" evidence="3">
    <location>
        <begin position="578"/>
        <end position="590"/>
    </location>
</feature>
<feature type="modified residue" description="Phosphoserine" evidence="6">
    <location>
        <position position="441"/>
    </location>
</feature>
<feature type="modified residue" description="Phosphoserine" evidence="6 8 9">
    <location>
        <position position="454"/>
    </location>
</feature>
<feature type="modified residue" description="Phosphoserine" evidence="8 9">
    <location>
        <position position="456"/>
    </location>
</feature>
<feature type="modified residue" description="Phosphothreonine" evidence="7 9">
    <location>
        <position position="517"/>
    </location>
</feature>
<feature type="modified residue" description="Phosphothreonine" evidence="6">
    <location>
        <position position="529"/>
    </location>
</feature>
<feature type="modified residue" description="Phosphoserine" evidence="9">
    <location>
        <position position="573"/>
    </location>
</feature>
<feature type="modified residue" description="Phosphoserine" evidence="9">
    <location>
        <position position="579"/>
    </location>
</feature>
<name>CORO_YEAST</name>